<protein>
    <recommendedName>
        <fullName evidence="1">Ribosome maturation factor RimP</fullName>
    </recommendedName>
</protein>
<sequence length="203" mass="22098">MTDAPDHHPADAAEKRLITETGVAARVAQIVEPSLEGLGFRLVRVRVTGQNGCTVQIMAERPDGTMTVEDCESVSRTISPLLDVDDPIGRAYHLEISSPGIDRPLVRVGDFARWAGHEAKVELTVPLEGRKRFRGIIRAPEGESVRIDLPDAKEGTPASYDLRLRDIGEAHLVLTDALIRESLRRGSAPVEDEEGEGEAPTAH</sequence>
<proteinExistence type="inferred from homology"/>
<gene>
    <name evidence="1" type="primary">rimP</name>
    <name type="ordered locus">Mnod_4615</name>
</gene>
<reference key="1">
    <citation type="submission" date="2009-01" db="EMBL/GenBank/DDBJ databases">
        <title>Complete sequence of chromosome of Methylobacterium nodulans ORS 2060.</title>
        <authorList>
            <consortium name="US DOE Joint Genome Institute"/>
            <person name="Lucas S."/>
            <person name="Copeland A."/>
            <person name="Lapidus A."/>
            <person name="Glavina del Rio T."/>
            <person name="Dalin E."/>
            <person name="Tice H."/>
            <person name="Bruce D."/>
            <person name="Goodwin L."/>
            <person name="Pitluck S."/>
            <person name="Sims D."/>
            <person name="Brettin T."/>
            <person name="Detter J.C."/>
            <person name="Han C."/>
            <person name="Larimer F."/>
            <person name="Land M."/>
            <person name="Hauser L."/>
            <person name="Kyrpides N."/>
            <person name="Ivanova N."/>
            <person name="Marx C.J."/>
            <person name="Richardson P."/>
        </authorList>
    </citation>
    <scope>NUCLEOTIDE SEQUENCE [LARGE SCALE GENOMIC DNA]</scope>
    <source>
        <strain>LMG 21967 / CNCM I-2342 / ORS 2060</strain>
    </source>
</reference>
<accession>B8IEB0</accession>
<evidence type="ECO:0000255" key="1">
    <source>
        <dbReference type="HAMAP-Rule" id="MF_01077"/>
    </source>
</evidence>
<evidence type="ECO:0000256" key="2">
    <source>
        <dbReference type="SAM" id="MobiDB-lite"/>
    </source>
</evidence>
<evidence type="ECO:0000305" key="3"/>
<feature type="chain" id="PRO_0000384703" description="Ribosome maturation factor RimP">
    <location>
        <begin position="1"/>
        <end position="203"/>
    </location>
</feature>
<feature type="region of interest" description="Disordered" evidence="2">
    <location>
        <begin position="184"/>
        <end position="203"/>
    </location>
</feature>
<keyword id="KW-0963">Cytoplasm</keyword>
<keyword id="KW-1185">Reference proteome</keyword>
<keyword id="KW-0690">Ribosome biogenesis</keyword>
<dbReference type="EMBL" id="CP001349">
    <property type="protein sequence ID" value="ACL59482.1"/>
    <property type="status" value="ALT_INIT"/>
    <property type="molecule type" value="Genomic_DNA"/>
</dbReference>
<dbReference type="RefSeq" id="WP_043749208.1">
    <property type="nucleotide sequence ID" value="NC_011894.1"/>
</dbReference>
<dbReference type="SMR" id="B8IEB0"/>
<dbReference type="STRING" id="460265.Mnod_4615"/>
<dbReference type="KEGG" id="mno:Mnod_4615"/>
<dbReference type="eggNOG" id="COG0779">
    <property type="taxonomic scope" value="Bacteria"/>
</dbReference>
<dbReference type="HOGENOM" id="CLU_070525_0_1_5"/>
<dbReference type="OrthoDB" id="9805006at2"/>
<dbReference type="Proteomes" id="UP000008207">
    <property type="component" value="Chromosome"/>
</dbReference>
<dbReference type="GO" id="GO:0005829">
    <property type="term" value="C:cytosol"/>
    <property type="evidence" value="ECO:0007669"/>
    <property type="project" value="TreeGrafter"/>
</dbReference>
<dbReference type="GO" id="GO:0000028">
    <property type="term" value="P:ribosomal small subunit assembly"/>
    <property type="evidence" value="ECO:0007669"/>
    <property type="project" value="TreeGrafter"/>
</dbReference>
<dbReference type="GO" id="GO:0006412">
    <property type="term" value="P:translation"/>
    <property type="evidence" value="ECO:0007669"/>
    <property type="project" value="TreeGrafter"/>
</dbReference>
<dbReference type="CDD" id="cd01734">
    <property type="entry name" value="YlxS_C"/>
    <property type="match status" value="1"/>
</dbReference>
<dbReference type="Gene3D" id="3.30.300.70">
    <property type="entry name" value="RimP-like superfamily, N-terminal"/>
    <property type="match status" value="1"/>
</dbReference>
<dbReference type="HAMAP" id="MF_01077">
    <property type="entry name" value="RimP"/>
    <property type="match status" value="1"/>
</dbReference>
<dbReference type="InterPro" id="IPR003728">
    <property type="entry name" value="Ribosome_maturation_RimP"/>
</dbReference>
<dbReference type="InterPro" id="IPR028998">
    <property type="entry name" value="RimP_C"/>
</dbReference>
<dbReference type="InterPro" id="IPR036847">
    <property type="entry name" value="RimP_C_sf"/>
</dbReference>
<dbReference type="InterPro" id="IPR028989">
    <property type="entry name" value="RimP_N"/>
</dbReference>
<dbReference type="InterPro" id="IPR035956">
    <property type="entry name" value="RimP_N_sf"/>
</dbReference>
<dbReference type="NCBIfam" id="NF000932">
    <property type="entry name" value="PRK00092.2-5"/>
    <property type="match status" value="1"/>
</dbReference>
<dbReference type="PANTHER" id="PTHR33867">
    <property type="entry name" value="RIBOSOME MATURATION FACTOR RIMP"/>
    <property type="match status" value="1"/>
</dbReference>
<dbReference type="PANTHER" id="PTHR33867:SF1">
    <property type="entry name" value="RIBOSOME MATURATION FACTOR RIMP"/>
    <property type="match status" value="1"/>
</dbReference>
<dbReference type="Pfam" id="PF17384">
    <property type="entry name" value="DUF150_C"/>
    <property type="match status" value="1"/>
</dbReference>
<dbReference type="Pfam" id="PF02576">
    <property type="entry name" value="RimP_N"/>
    <property type="match status" value="1"/>
</dbReference>
<dbReference type="SUPFAM" id="SSF74942">
    <property type="entry name" value="YhbC-like, C-terminal domain"/>
    <property type="match status" value="1"/>
</dbReference>
<dbReference type="SUPFAM" id="SSF75420">
    <property type="entry name" value="YhbC-like, N-terminal domain"/>
    <property type="match status" value="1"/>
</dbReference>
<organism>
    <name type="scientific">Methylobacterium nodulans (strain LMG 21967 / CNCM I-2342 / ORS 2060)</name>
    <dbReference type="NCBI Taxonomy" id="460265"/>
    <lineage>
        <taxon>Bacteria</taxon>
        <taxon>Pseudomonadati</taxon>
        <taxon>Pseudomonadota</taxon>
        <taxon>Alphaproteobacteria</taxon>
        <taxon>Hyphomicrobiales</taxon>
        <taxon>Methylobacteriaceae</taxon>
        <taxon>Methylobacterium</taxon>
    </lineage>
</organism>
<comment type="function">
    <text evidence="1">Required for maturation of 30S ribosomal subunits.</text>
</comment>
<comment type="subcellular location">
    <subcellularLocation>
        <location evidence="1">Cytoplasm</location>
    </subcellularLocation>
</comment>
<comment type="similarity">
    <text evidence="1">Belongs to the RimP family.</text>
</comment>
<comment type="sequence caution" evidence="3">
    <conflict type="erroneous initiation">
        <sequence resource="EMBL-CDS" id="ACL59482"/>
    </conflict>
</comment>
<name>RIMP_METNO</name>